<name>NDK_RICCN</name>
<feature type="chain" id="PRO_0000137033" description="Nucleoside diphosphate kinase">
    <location>
        <begin position="1"/>
        <end position="140"/>
    </location>
</feature>
<feature type="active site" description="Pros-phosphohistidine intermediate" evidence="1">
    <location>
        <position position="117"/>
    </location>
</feature>
<feature type="binding site" evidence="1">
    <location>
        <position position="11"/>
    </location>
    <ligand>
        <name>ATP</name>
        <dbReference type="ChEBI" id="CHEBI:30616"/>
    </ligand>
</feature>
<feature type="binding site" evidence="1">
    <location>
        <position position="59"/>
    </location>
    <ligand>
        <name>ATP</name>
        <dbReference type="ChEBI" id="CHEBI:30616"/>
    </ligand>
</feature>
<feature type="binding site" evidence="1">
    <location>
        <position position="87"/>
    </location>
    <ligand>
        <name>ATP</name>
        <dbReference type="ChEBI" id="CHEBI:30616"/>
    </ligand>
</feature>
<feature type="binding site" evidence="1">
    <location>
        <position position="93"/>
    </location>
    <ligand>
        <name>ATP</name>
        <dbReference type="ChEBI" id="CHEBI:30616"/>
    </ligand>
</feature>
<feature type="binding site" evidence="1">
    <location>
        <position position="104"/>
    </location>
    <ligand>
        <name>ATP</name>
        <dbReference type="ChEBI" id="CHEBI:30616"/>
    </ligand>
</feature>
<feature type="binding site" evidence="1">
    <location>
        <position position="114"/>
    </location>
    <ligand>
        <name>ATP</name>
        <dbReference type="ChEBI" id="CHEBI:30616"/>
    </ligand>
</feature>
<comment type="function">
    <text evidence="1">Major role in the synthesis of nucleoside triphosphates other than ATP. The ATP gamma phosphate is transferred to the NDP beta phosphate via a ping-pong mechanism, using a phosphorylated active-site intermediate.</text>
</comment>
<comment type="catalytic activity">
    <reaction evidence="1">
        <text>a 2'-deoxyribonucleoside 5'-diphosphate + ATP = a 2'-deoxyribonucleoside 5'-triphosphate + ADP</text>
        <dbReference type="Rhea" id="RHEA:44640"/>
        <dbReference type="ChEBI" id="CHEBI:30616"/>
        <dbReference type="ChEBI" id="CHEBI:61560"/>
        <dbReference type="ChEBI" id="CHEBI:73316"/>
        <dbReference type="ChEBI" id="CHEBI:456216"/>
        <dbReference type="EC" id="2.7.4.6"/>
    </reaction>
</comment>
<comment type="catalytic activity">
    <reaction evidence="1">
        <text>a ribonucleoside 5'-diphosphate + ATP = a ribonucleoside 5'-triphosphate + ADP</text>
        <dbReference type="Rhea" id="RHEA:18113"/>
        <dbReference type="ChEBI" id="CHEBI:30616"/>
        <dbReference type="ChEBI" id="CHEBI:57930"/>
        <dbReference type="ChEBI" id="CHEBI:61557"/>
        <dbReference type="ChEBI" id="CHEBI:456216"/>
        <dbReference type="EC" id="2.7.4.6"/>
    </reaction>
</comment>
<comment type="cofactor">
    <cofactor evidence="1">
        <name>Mg(2+)</name>
        <dbReference type="ChEBI" id="CHEBI:18420"/>
    </cofactor>
</comment>
<comment type="subunit">
    <text evidence="1">Homotetramer.</text>
</comment>
<comment type="subcellular location">
    <subcellularLocation>
        <location evidence="1">Cytoplasm</location>
    </subcellularLocation>
</comment>
<comment type="similarity">
    <text evidence="1">Belongs to the NDK family.</text>
</comment>
<proteinExistence type="inferred from homology"/>
<dbReference type="EC" id="2.7.4.6" evidence="1"/>
<dbReference type="EMBL" id="AE006914">
    <property type="protein sequence ID" value="AAL02621.1"/>
    <property type="molecule type" value="Genomic_DNA"/>
</dbReference>
<dbReference type="PIR" id="C97710">
    <property type="entry name" value="C97710"/>
</dbReference>
<dbReference type="RefSeq" id="WP_010976767.1">
    <property type="nucleotide sequence ID" value="NC_003103.1"/>
</dbReference>
<dbReference type="SMR" id="Q92JI4"/>
<dbReference type="GeneID" id="95361814"/>
<dbReference type="KEGG" id="rco:RC0083"/>
<dbReference type="HOGENOM" id="CLU_060216_8_1_5"/>
<dbReference type="Proteomes" id="UP000000816">
    <property type="component" value="Chromosome"/>
</dbReference>
<dbReference type="GO" id="GO:0005737">
    <property type="term" value="C:cytoplasm"/>
    <property type="evidence" value="ECO:0007669"/>
    <property type="project" value="UniProtKB-SubCell"/>
</dbReference>
<dbReference type="GO" id="GO:0005524">
    <property type="term" value="F:ATP binding"/>
    <property type="evidence" value="ECO:0007669"/>
    <property type="project" value="UniProtKB-UniRule"/>
</dbReference>
<dbReference type="GO" id="GO:0046872">
    <property type="term" value="F:metal ion binding"/>
    <property type="evidence" value="ECO:0007669"/>
    <property type="project" value="UniProtKB-KW"/>
</dbReference>
<dbReference type="GO" id="GO:0004550">
    <property type="term" value="F:nucleoside diphosphate kinase activity"/>
    <property type="evidence" value="ECO:0007669"/>
    <property type="project" value="UniProtKB-UniRule"/>
</dbReference>
<dbReference type="GO" id="GO:0006241">
    <property type="term" value="P:CTP biosynthetic process"/>
    <property type="evidence" value="ECO:0007669"/>
    <property type="project" value="UniProtKB-UniRule"/>
</dbReference>
<dbReference type="GO" id="GO:0006183">
    <property type="term" value="P:GTP biosynthetic process"/>
    <property type="evidence" value="ECO:0007669"/>
    <property type="project" value="UniProtKB-UniRule"/>
</dbReference>
<dbReference type="GO" id="GO:0006228">
    <property type="term" value="P:UTP biosynthetic process"/>
    <property type="evidence" value="ECO:0007669"/>
    <property type="project" value="UniProtKB-UniRule"/>
</dbReference>
<dbReference type="CDD" id="cd04413">
    <property type="entry name" value="NDPk_I"/>
    <property type="match status" value="1"/>
</dbReference>
<dbReference type="FunFam" id="3.30.70.141:FF:000003">
    <property type="entry name" value="Nucleoside diphosphate kinase"/>
    <property type="match status" value="1"/>
</dbReference>
<dbReference type="Gene3D" id="3.30.70.141">
    <property type="entry name" value="Nucleoside diphosphate kinase-like domain"/>
    <property type="match status" value="1"/>
</dbReference>
<dbReference type="HAMAP" id="MF_00451">
    <property type="entry name" value="NDP_kinase"/>
    <property type="match status" value="1"/>
</dbReference>
<dbReference type="InterPro" id="IPR034907">
    <property type="entry name" value="NDK-like_dom"/>
</dbReference>
<dbReference type="InterPro" id="IPR036850">
    <property type="entry name" value="NDK-like_dom_sf"/>
</dbReference>
<dbReference type="InterPro" id="IPR001564">
    <property type="entry name" value="Nucleoside_diP_kinase"/>
</dbReference>
<dbReference type="InterPro" id="IPR023005">
    <property type="entry name" value="Nucleoside_diP_kinase_AS"/>
</dbReference>
<dbReference type="NCBIfam" id="NF001908">
    <property type="entry name" value="PRK00668.1"/>
    <property type="match status" value="1"/>
</dbReference>
<dbReference type="PANTHER" id="PTHR46161">
    <property type="entry name" value="NUCLEOSIDE DIPHOSPHATE KINASE"/>
    <property type="match status" value="1"/>
</dbReference>
<dbReference type="PANTHER" id="PTHR46161:SF3">
    <property type="entry name" value="NUCLEOSIDE DIPHOSPHATE KINASE DDB_G0292928-RELATED"/>
    <property type="match status" value="1"/>
</dbReference>
<dbReference type="Pfam" id="PF00334">
    <property type="entry name" value="NDK"/>
    <property type="match status" value="1"/>
</dbReference>
<dbReference type="PRINTS" id="PR01243">
    <property type="entry name" value="NUCDPKINASE"/>
</dbReference>
<dbReference type="SMART" id="SM00562">
    <property type="entry name" value="NDK"/>
    <property type="match status" value="1"/>
</dbReference>
<dbReference type="SUPFAM" id="SSF54919">
    <property type="entry name" value="Nucleoside diphosphate kinase, NDK"/>
    <property type="match status" value="1"/>
</dbReference>
<dbReference type="PROSITE" id="PS00469">
    <property type="entry name" value="NDPK"/>
    <property type="match status" value="1"/>
</dbReference>
<dbReference type="PROSITE" id="PS51374">
    <property type="entry name" value="NDPK_LIKE"/>
    <property type="match status" value="1"/>
</dbReference>
<reference key="1">
    <citation type="journal article" date="2001" name="Science">
        <title>Mechanisms of evolution in Rickettsia conorii and R. prowazekii.</title>
        <authorList>
            <person name="Ogata H."/>
            <person name="Audic S."/>
            <person name="Renesto-Audiffren P."/>
            <person name="Fournier P.-E."/>
            <person name="Barbe V."/>
            <person name="Samson D."/>
            <person name="Roux V."/>
            <person name="Cossart P."/>
            <person name="Weissenbach J."/>
            <person name="Claverie J.-M."/>
            <person name="Raoult D."/>
        </authorList>
    </citation>
    <scope>NUCLEOTIDE SEQUENCE [LARGE SCALE GENOMIC DNA]</scope>
    <source>
        <strain>ATCC VR-613 / Malish 7</strain>
    </source>
</reference>
<evidence type="ECO:0000255" key="1">
    <source>
        <dbReference type="HAMAP-Rule" id="MF_00451"/>
    </source>
</evidence>
<protein>
    <recommendedName>
        <fullName evidence="1">Nucleoside diphosphate kinase</fullName>
        <shortName evidence="1">NDK</shortName>
        <shortName evidence="1">NDP kinase</shortName>
        <ecNumber evidence="1">2.7.4.6</ecNumber>
    </recommendedName>
    <alternativeName>
        <fullName evidence="1">Nucleoside-2-P kinase</fullName>
    </alternativeName>
</protein>
<gene>
    <name evidence="1" type="primary">ndk</name>
    <name type="ordered locus">RC0083</name>
</gene>
<sequence length="140" mass="15690">MTIQYTFSMIKPDAIKRNKIGQVNTYLENAGLKIVAQKMKFLTKYEAACFYDEHRARPFFNSLVEYITSGAVVLQVLKGEDAITLNRTVMGATNPAEAEAGTIRKDLGESIEANSIHGSDSENSAKREIEFFFNKSEIIE</sequence>
<organism>
    <name type="scientific">Rickettsia conorii (strain ATCC VR-613 / Malish 7)</name>
    <dbReference type="NCBI Taxonomy" id="272944"/>
    <lineage>
        <taxon>Bacteria</taxon>
        <taxon>Pseudomonadati</taxon>
        <taxon>Pseudomonadota</taxon>
        <taxon>Alphaproteobacteria</taxon>
        <taxon>Rickettsiales</taxon>
        <taxon>Rickettsiaceae</taxon>
        <taxon>Rickettsieae</taxon>
        <taxon>Rickettsia</taxon>
        <taxon>spotted fever group</taxon>
    </lineage>
</organism>
<keyword id="KW-0067">ATP-binding</keyword>
<keyword id="KW-0963">Cytoplasm</keyword>
<keyword id="KW-0418">Kinase</keyword>
<keyword id="KW-0460">Magnesium</keyword>
<keyword id="KW-0479">Metal-binding</keyword>
<keyword id="KW-0546">Nucleotide metabolism</keyword>
<keyword id="KW-0547">Nucleotide-binding</keyword>
<keyword id="KW-0597">Phosphoprotein</keyword>
<keyword id="KW-0808">Transferase</keyword>
<accession>Q92JI4</accession>